<gene>
    <name evidence="1" type="primary">sucC</name>
    <name type="ordered locus">PFLU_1823</name>
</gene>
<protein>
    <recommendedName>
        <fullName evidence="1">Succinate--CoA ligase [ADP-forming] subunit beta</fullName>
        <ecNumber evidence="1">6.2.1.5</ecNumber>
    </recommendedName>
    <alternativeName>
        <fullName evidence="1">Succinyl-CoA synthetase subunit beta</fullName>
        <shortName evidence="1">SCS-beta</shortName>
    </alternativeName>
</protein>
<accession>C3K6N0</accession>
<organism>
    <name type="scientific">Pseudomonas fluorescens (strain SBW25)</name>
    <dbReference type="NCBI Taxonomy" id="216595"/>
    <lineage>
        <taxon>Bacteria</taxon>
        <taxon>Pseudomonadati</taxon>
        <taxon>Pseudomonadota</taxon>
        <taxon>Gammaproteobacteria</taxon>
        <taxon>Pseudomonadales</taxon>
        <taxon>Pseudomonadaceae</taxon>
        <taxon>Pseudomonas</taxon>
    </lineage>
</organism>
<sequence length="388" mass="41287">MNLHEYQGKQLFAEYGLPVSKGYAVDTPEAAAEACDKIGGTEWVVKAQVHAGGRGKAGGVKLVRSKEDAKAFAQQWLGKRLVTYQTDANGQPVTKILVESCTDIAKELYLGAVVDRSSRRIVFMASTEGGVDIEKIAEETPEKILKATIDPLVGAQPFQGRELAFQLGLEGKQVAQFAKIFVGLAKLFQDHDLALLEVNPLVIKADGDLHCLDAKINIDANAMYRQPKLKTFHDPSQDDPREAHAAKFELNYVALEGNIGCMVNGAGLAMGTMDIVNLHGGKPANFLDVGGGATKERVTEAFKIILSDSNVAAVLVNIFGGIVRCDMIAEGIIGAVKEVGVKIPVVVRLEGNNAELGAKVLAESGLNIIAATSLTDAAQQVVKAAEGK</sequence>
<proteinExistence type="inferred from homology"/>
<name>SUCC_PSEFS</name>
<reference key="1">
    <citation type="journal article" date="2009" name="Genome Biol.">
        <title>Genomic and genetic analyses of diversity and plant interactions of Pseudomonas fluorescens.</title>
        <authorList>
            <person name="Silby M.W."/>
            <person name="Cerdeno-Tarraga A.M."/>
            <person name="Vernikos G.S."/>
            <person name="Giddens S.R."/>
            <person name="Jackson R.W."/>
            <person name="Preston G.M."/>
            <person name="Zhang X.-X."/>
            <person name="Moon C.D."/>
            <person name="Gehrig S.M."/>
            <person name="Godfrey S.A.C."/>
            <person name="Knight C.G."/>
            <person name="Malone J.G."/>
            <person name="Robinson Z."/>
            <person name="Spiers A.J."/>
            <person name="Harris S."/>
            <person name="Challis G.L."/>
            <person name="Yaxley A.M."/>
            <person name="Harris D."/>
            <person name="Seeger K."/>
            <person name="Murphy L."/>
            <person name="Rutter S."/>
            <person name="Squares R."/>
            <person name="Quail M.A."/>
            <person name="Saunders E."/>
            <person name="Mavromatis K."/>
            <person name="Brettin T.S."/>
            <person name="Bentley S.D."/>
            <person name="Hothersall J."/>
            <person name="Stephens E."/>
            <person name="Thomas C.M."/>
            <person name="Parkhill J."/>
            <person name="Levy S.B."/>
            <person name="Rainey P.B."/>
            <person name="Thomson N.R."/>
        </authorList>
    </citation>
    <scope>NUCLEOTIDE SEQUENCE [LARGE SCALE GENOMIC DNA]</scope>
    <source>
        <strain>SBW25</strain>
    </source>
</reference>
<feature type="chain" id="PRO_1000212029" description="Succinate--CoA ligase [ADP-forming] subunit beta">
    <location>
        <begin position="1"/>
        <end position="388"/>
    </location>
</feature>
<feature type="domain" description="ATP-grasp" evidence="1">
    <location>
        <begin position="9"/>
        <end position="244"/>
    </location>
</feature>
<feature type="binding site" evidence="1">
    <location>
        <position position="46"/>
    </location>
    <ligand>
        <name>ATP</name>
        <dbReference type="ChEBI" id="CHEBI:30616"/>
    </ligand>
</feature>
<feature type="binding site" evidence="1">
    <location>
        <begin position="53"/>
        <end position="55"/>
    </location>
    <ligand>
        <name>ATP</name>
        <dbReference type="ChEBI" id="CHEBI:30616"/>
    </ligand>
</feature>
<feature type="binding site" evidence="1">
    <location>
        <position position="99"/>
    </location>
    <ligand>
        <name>ATP</name>
        <dbReference type="ChEBI" id="CHEBI:30616"/>
    </ligand>
</feature>
<feature type="binding site" evidence="1">
    <location>
        <position position="102"/>
    </location>
    <ligand>
        <name>ATP</name>
        <dbReference type="ChEBI" id="CHEBI:30616"/>
    </ligand>
</feature>
<feature type="binding site" evidence="1">
    <location>
        <position position="107"/>
    </location>
    <ligand>
        <name>ATP</name>
        <dbReference type="ChEBI" id="CHEBI:30616"/>
    </ligand>
</feature>
<feature type="binding site" evidence="1">
    <location>
        <position position="199"/>
    </location>
    <ligand>
        <name>Mg(2+)</name>
        <dbReference type="ChEBI" id="CHEBI:18420"/>
    </ligand>
</feature>
<feature type="binding site" evidence="1">
    <location>
        <position position="213"/>
    </location>
    <ligand>
        <name>Mg(2+)</name>
        <dbReference type="ChEBI" id="CHEBI:18420"/>
    </ligand>
</feature>
<feature type="binding site" evidence="1">
    <location>
        <position position="264"/>
    </location>
    <ligand>
        <name>substrate</name>
        <note>ligand shared with subunit alpha</note>
    </ligand>
</feature>
<feature type="binding site" evidence="1">
    <location>
        <begin position="321"/>
        <end position="323"/>
    </location>
    <ligand>
        <name>substrate</name>
        <note>ligand shared with subunit alpha</note>
    </ligand>
</feature>
<dbReference type="EC" id="6.2.1.5" evidence="1"/>
<dbReference type="EMBL" id="AM181176">
    <property type="protein sequence ID" value="CAY48070.1"/>
    <property type="molecule type" value="Genomic_DNA"/>
</dbReference>
<dbReference type="RefSeq" id="WP_003210567.1">
    <property type="nucleotide sequence ID" value="NC_012660.1"/>
</dbReference>
<dbReference type="SMR" id="C3K6N0"/>
<dbReference type="STRING" id="294.SRM1_01614"/>
<dbReference type="GeneID" id="93515671"/>
<dbReference type="eggNOG" id="COG0045">
    <property type="taxonomic scope" value="Bacteria"/>
</dbReference>
<dbReference type="HOGENOM" id="CLU_037430_0_2_6"/>
<dbReference type="OrthoDB" id="9802602at2"/>
<dbReference type="UniPathway" id="UPA00223">
    <property type="reaction ID" value="UER00999"/>
</dbReference>
<dbReference type="GO" id="GO:0005829">
    <property type="term" value="C:cytosol"/>
    <property type="evidence" value="ECO:0007669"/>
    <property type="project" value="TreeGrafter"/>
</dbReference>
<dbReference type="GO" id="GO:0042709">
    <property type="term" value="C:succinate-CoA ligase complex"/>
    <property type="evidence" value="ECO:0007669"/>
    <property type="project" value="TreeGrafter"/>
</dbReference>
<dbReference type="GO" id="GO:0005524">
    <property type="term" value="F:ATP binding"/>
    <property type="evidence" value="ECO:0007669"/>
    <property type="project" value="UniProtKB-UniRule"/>
</dbReference>
<dbReference type="GO" id="GO:0000287">
    <property type="term" value="F:magnesium ion binding"/>
    <property type="evidence" value="ECO:0007669"/>
    <property type="project" value="UniProtKB-UniRule"/>
</dbReference>
<dbReference type="GO" id="GO:0004775">
    <property type="term" value="F:succinate-CoA ligase (ADP-forming) activity"/>
    <property type="evidence" value="ECO:0007669"/>
    <property type="project" value="UniProtKB-UniRule"/>
</dbReference>
<dbReference type="GO" id="GO:0004776">
    <property type="term" value="F:succinate-CoA ligase (GDP-forming) activity"/>
    <property type="evidence" value="ECO:0007669"/>
    <property type="project" value="RHEA"/>
</dbReference>
<dbReference type="GO" id="GO:0006104">
    <property type="term" value="P:succinyl-CoA metabolic process"/>
    <property type="evidence" value="ECO:0007669"/>
    <property type="project" value="TreeGrafter"/>
</dbReference>
<dbReference type="GO" id="GO:0006099">
    <property type="term" value="P:tricarboxylic acid cycle"/>
    <property type="evidence" value="ECO:0007669"/>
    <property type="project" value="UniProtKB-UniRule"/>
</dbReference>
<dbReference type="FunFam" id="3.30.1490.20:FF:000002">
    <property type="entry name" value="Succinate--CoA ligase [ADP-forming] subunit beta"/>
    <property type="match status" value="1"/>
</dbReference>
<dbReference type="FunFam" id="3.30.470.20:FF:000002">
    <property type="entry name" value="Succinate--CoA ligase [ADP-forming] subunit beta"/>
    <property type="match status" value="1"/>
</dbReference>
<dbReference type="FunFam" id="3.40.50.261:FF:000001">
    <property type="entry name" value="Succinate--CoA ligase [ADP-forming] subunit beta"/>
    <property type="match status" value="1"/>
</dbReference>
<dbReference type="Gene3D" id="3.30.1490.20">
    <property type="entry name" value="ATP-grasp fold, A domain"/>
    <property type="match status" value="1"/>
</dbReference>
<dbReference type="Gene3D" id="3.30.470.20">
    <property type="entry name" value="ATP-grasp fold, B domain"/>
    <property type="match status" value="1"/>
</dbReference>
<dbReference type="Gene3D" id="3.40.50.261">
    <property type="entry name" value="Succinyl-CoA synthetase domains"/>
    <property type="match status" value="1"/>
</dbReference>
<dbReference type="HAMAP" id="MF_00558">
    <property type="entry name" value="Succ_CoA_beta"/>
    <property type="match status" value="1"/>
</dbReference>
<dbReference type="InterPro" id="IPR011761">
    <property type="entry name" value="ATP-grasp"/>
</dbReference>
<dbReference type="InterPro" id="IPR013650">
    <property type="entry name" value="ATP-grasp_succ-CoA_synth-type"/>
</dbReference>
<dbReference type="InterPro" id="IPR013815">
    <property type="entry name" value="ATP_grasp_subdomain_1"/>
</dbReference>
<dbReference type="InterPro" id="IPR017866">
    <property type="entry name" value="Succ-CoA_synthase_bsu_CS"/>
</dbReference>
<dbReference type="InterPro" id="IPR005811">
    <property type="entry name" value="SUCC_ACL_C"/>
</dbReference>
<dbReference type="InterPro" id="IPR005809">
    <property type="entry name" value="Succ_CoA_ligase-like_bsu"/>
</dbReference>
<dbReference type="InterPro" id="IPR016102">
    <property type="entry name" value="Succinyl-CoA_synth-like"/>
</dbReference>
<dbReference type="NCBIfam" id="NF001913">
    <property type="entry name" value="PRK00696.1"/>
    <property type="match status" value="1"/>
</dbReference>
<dbReference type="NCBIfam" id="TIGR01016">
    <property type="entry name" value="sucCoAbeta"/>
    <property type="match status" value="1"/>
</dbReference>
<dbReference type="PANTHER" id="PTHR11815:SF10">
    <property type="entry name" value="SUCCINATE--COA LIGASE [GDP-FORMING] SUBUNIT BETA, MITOCHONDRIAL"/>
    <property type="match status" value="1"/>
</dbReference>
<dbReference type="PANTHER" id="PTHR11815">
    <property type="entry name" value="SUCCINYL-COA SYNTHETASE BETA CHAIN"/>
    <property type="match status" value="1"/>
</dbReference>
<dbReference type="Pfam" id="PF08442">
    <property type="entry name" value="ATP-grasp_2"/>
    <property type="match status" value="1"/>
</dbReference>
<dbReference type="Pfam" id="PF00549">
    <property type="entry name" value="Ligase_CoA"/>
    <property type="match status" value="1"/>
</dbReference>
<dbReference type="PIRSF" id="PIRSF001554">
    <property type="entry name" value="SucCS_beta"/>
    <property type="match status" value="1"/>
</dbReference>
<dbReference type="SUPFAM" id="SSF56059">
    <property type="entry name" value="Glutathione synthetase ATP-binding domain-like"/>
    <property type="match status" value="1"/>
</dbReference>
<dbReference type="SUPFAM" id="SSF52210">
    <property type="entry name" value="Succinyl-CoA synthetase domains"/>
    <property type="match status" value="1"/>
</dbReference>
<dbReference type="PROSITE" id="PS50975">
    <property type="entry name" value="ATP_GRASP"/>
    <property type="match status" value="1"/>
</dbReference>
<dbReference type="PROSITE" id="PS01217">
    <property type="entry name" value="SUCCINYL_COA_LIG_3"/>
    <property type="match status" value="1"/>
</dbReference>
<evidence type="ECO:0000255" key="1">
    <source>
        <dbReference type="HAMAP-Rule" id="MF_00558"/>
    </source>
</evidence>
<keyword id="KW-0067">ATP-binding</keyword>
<keyword id="KW-0436">Ligase</keyword>
<keyword id="KW-0460">Magnesium</keyword>
<keyword id="KW-0479">Metal-binding</keyword>
<keyword id="KW-0547">Nucleotide-binding</keyword>
<keyword id="KW-0816">Tricarboxylic acid cycle</keyword>
<comment type="function">
    <text evidence="1">Succinyl-CoA synthetase functions in the citric acid cycle (TCA), coupling the hydrolysis of succinyl-CoA to the synthesis of either ATP or GTP and thus represents the only step of substrate-level phosphorylation in the TCA. The beta subunit provides nucleotide specificity of the enzyme and binds the substrate succinate, while the binding sites for coenzyme A and phosphate are found in the alpha subunit.</text>
</comment>
<comment type="catalytic activity">
    <reaction evidence="1">
        <text>succinate + ATP + CoA = succinyl-CoA + ADP + phosphate</text>
        <dbReference type="Rhea" id="RHEA:17661"/>
        <dbReference type="ChEBI" id="CHEBI:30031"/>
        <dbReference type="ChEBI" id="CHEBI:30616"/>
        <dbReference type="ChEBI" id="CHEBI:43474"/>
        <dbReference type="ChEBI" id="CHEBI:57287"/>
        <dbReference type="ChEBI" id="CHEBI:57292"/>
        <dbReference type="ChEBI" id="CHEBI:456216"/>
        <dbReference type="EC" id="6.2.1.5"/>
    </reaction>
    <physiologicalReaction direction="right-to-left" evidence="1">
        <dbReference type="Rhea" id="RHEA:17663"/>
    </physiologicalReaction>
</comment>
<comment type="catalytic activity">
    <reaction evidence="1">
        <text>GTP + succinate + CoA = succinyl-CoA + GDP + phosphate</text>
        <dbReference type="Rhea" id="RHEA:22120"/>
        <dbReference type="ChEBI" id="CHEBI:30031"/>
        <dbReference type="ChEBI" id="CHEBI:37565"/>
        <dbReference type="ChEBI" id="CHEBI:43474"/>
        <dbReference type="ChEBI" id="CHEBI:57287"/>
        <dbReference type="ChEBI" id="CHEBI:57292"/>
        <dbReference type="ChEBI" id="CHEBI:58189"/>
    </reaction>
    <physiologicalReaction direction="right-to-left" evidence="1">
        <dbReference type="Rhea" id="RHEA:22122"/>
    </physiologicalReaction>
</comment>
<comment type="cofactor">
    <cofactor evidence="1">
        <name>Mg(2+)</name>
        <dbReference type="ChEBI" id="CHEBI:18420"/>
    </cofactor>
    <text evidence="1">Binds 1 Mg(2+) ion per subunit.</text>
</comment>
<comment type="pathway">
    <text evidence="1">Carbohydrate metabolism; tricarboxylic acid cycle; succinate from succinyl-CoA (ligase route): step 1/1.</text>
</comment>
<comment type="subunit">
    <text evidence="1">Heterotetramer of two alpha and two beta subunits.</text>
</comment>
<comment type="similarity">
    <text evidence="1">Belongs to the succinate/malate CoA ligase beta subunit family.</text>
</comment>